<organism>
    <name type="scientific">Macaca fascicularis</name>
    <name type="common">Crab-eating macaque</name>
    <name type="synonym">Cynomolgus monkey</name>
    <dbReference type="NCBI Taxonomy" id="9541"/>
    <lineage>
        <taxon>Eukaryota</taxon>
        <taxon>Metazoa</taxon>
        <taxon>Chordata</taxon>
        <taxon>Craniata</taxon>
        <taxon>Vertebrata</taxon>
        <taxon>Euteleostomi</taxon>
        <taxon>Mammalia</taxon>
        <taxon>Eutheria</taxon>
        <taxon>Euarchontoglires</taxon>
        <taxon>Primates</taxon>
        <taxon>Haplorrhini</taxon>
        <taxon>Catarrhini</taxon>
        <taxon>Cercopithecidae</taxon>
        <taxon>Cercopithecinae</taxon>
        <taxon>Macaca</taxon>
    </lineage>
</organism>
<sequence length="271" mass="30686">MAKVPDMFEDLKNCYSENEEVSSSIDHLSLNQKSFYDVSYGPLHEGCMDQSVSLSISEISKTSKLTFKQSMVVVSTNGKVLKKRRLSLSQSITDNNLEAIANDSEEEIIKPRSAPFSFLSNMTYHFIRIIKHEFILNDTLNQTIIRANDQYLTAAAIHNLDEAVKFDMGAYTSSKDDTKVPVILRISKTQLYVSAQDEDQPVLLKEMPEIPKTITGSETNFLFFWETHGTKNYFISVAHPNLFIATKHDNWVCLAKGLPSITDFQILENQA</sequence>
<comment type="function">
    <text evidence="3">Cytokine constitutively present intracellularly in nearly all resting non-hematopoietic cells that plays an important role in inflammation and bridges the innate and adaptive immune systems. After binding to its receptor IL1R1 together with its accessory protein IL1RAP, forms the high affinity interleukin-1 receptor complex. Signaling involves the recruitment of adapter molecules such as MYD88, IRAK1 or IRAK4. In turn, mediates the activation of NF-kappa-B and the three MAPK pathways p38, p42/p44 and JNK pathways. Within the cell, acts as an alarmin and cell death results in its liberation in the extracellular space after disruption of the cell membrane to induce inflammation and alert the host to injury or damage. In addition to its role as a danger signal, which occurs when the cytokine is passively released by cell necrosis, directly senses DNA damage and acts as signal for genotoxic stress without loss of cell integrity.</text>
</comment>
<comment type="subunit">
    <text evidence="3">Monomer. Interacts with TMED10; the interaction mediates the translocation from the cytoplasm into the ERGIC (endoplasmic reticulum-Golgi intermediate compartment) and thereby secretion. Interacts with IL1R1. Interacts with S100A13; this interaction is the first step in the export of IL1A, followed by direct translocation of this complex across the plasma membrane.</text>
</comment>
<comment type="subcellular location">
    <subcellularLocation>
        <location evidence="3">Nucleus</location>
    </subcellularLocation>
    <subcellularLocation>
        <location evidence="3">Cytoplasm</location>
    </subcellularLocation>
    <subcellularLocation>
        <location evidence="3">Secreted</location>
    </subcellularLocation>
    <text evidence="3">The lack of a specific hydrophobic segment in the precursor sequence suggests that IL-1 is released by damaged cells or is secreted by a mechanism differing from that used for other secretory proteins. The secretion is dependent on protein unfolding and facilitated by the cargo receptor TMED10; it results in protein translocation from the cytoplasm into the ERGIC (endoplasmic reticulum-Golgi intermediate compartment) followed by vesicle entry and secretion. Recruited to DNA damage sites and secreted after genotoxic stress.</text>
</comment>
<comment type="domain">
    <text>The similarity among the IL-1 precursors suggests that the amino ends of these proteins serve some as yet undefined function.</text>
</comment>
<comment type="PTM">
    <text evidence="3">Acetylated within its nuclear localization sequence, which impacts subcellular localization.</text>
</comment>
<comment type="PTM">
    <text evidence="3">Proteolytic processed by CAPN1 in a calcium-dependent manner. Cleavage from 31 kDa precursor to 18 kDa biologically active molecules.</text>
</comment>
<comment type="PTM">
    <text evidence="3">Phosphorylated. Phosphorylation greatly enhances susceptibility to digestion and promotes the conversion of pre-IL1A alpha to the biologically active IL1A.</text>
</comment>
<comment type="similarity">
    <text evidence="5">Belongs to the IL-1 family.</text>
</comment>
<proteinExistence type="evidence at transcript level"/>
<dbReference type="EMBL" id="AB000553">
    <property type="protein sequence ID" value="BAA19147.1"/>
    <property type="molecule type" value="mRNA"/>
</dbReference>
<dbReference type="SMR" id="P79340"/>
<dbReference type="STRING" id="9541.ENSMFAP00000022267"/>
<dbReference type="GlyCosmos" id="P79340">
    <property type="glycosylation" value="4 sites, No reported glycans"/>
</dbReference>
<dbReference type="eggNOG" id="ENOG502T3DD">
    <property type="taxonomic scope" value="Eukaryota"/>
</dbReference>
<dbReference type="Proteomes" id="UP000233100">
    <property type="component" value="Unplaced"/>
</dbReference>
<dbReference type="GO" id="GO:0005829">
    <property type="term" value="C:cytosol"/>
    <property type="evidence" value="ECO:0000250"/>
    <property type="project" value="UniProtKB"/>
</dbReference>
<dbReference type="GO" id="GO:0005615">
    <property type="term" value="C:extracellular space"/>
    <property type="evidence" value="ECO:0000250"/>
    <property type="project" value="UniProtKB"/>
</dbReference>
<dbReference type="GO" id="GO:0005634">
    <property type="term" value="C:nucleus"/>
    <property type="evidence" value="ECO:0007669"/>
    <property type="project" value="UniProtKB-SubCell"/>
</dbReference>
<dbReference type="GO" id="GO:0005507">
    <property type="term" value="F:copper ion binding"/>
    <property type="evidence" value="ECO:0000250"/>
    <property type="project" value="UniProtKB"/>
</dbReference>
<dbReference type="GO" id="GO:0005125">
    <property type="term" value="F:cytokine activity"/>
    <property type="evidence" value="ECO:0007669"/>
    <property type="project" value="UniProtKB-KW"/>
</dbReference>
<dbReference type="GO" id="GO:0005149">
    <property type="term" value="F:interleukin-1 receptor binding"/>
    <property type="evidence" value="ECO:0007669"/>
    <property type="project" value="InterPro"/>
</dbReference>
<dbReference type="GO" id="GO:0034605">
    <property type="term" value="P:cellular response to heat"/>
    <property type="evidence" value="ECO:0000250"/>
    <property type="project" value="UniProtKB"/>
</dbReference>
<dbReference type="GO" id="GO:0071222">
    <property type="term" value="P:cellular response to lipopolysaccharide"/>
    <property type="evidence" value="ECO:0007669"/>
    <property type="project" value="TreeGrafter"/>
</dbReference>
<dbReference type="GO" id="GO:0019221">
    <property type="term" value="P:cytokine-mediated signaling pathway"/>
    <property type="evidence" value="ECO:0007669"/>
    <property type="project" value="TreeGrafter"/>
</dbReference>
<dbReference type="GO" id="GO:0001660">
    <property type="term" value="P:fever generation"/>
    <property type="evidence" value="ECO:0007669"/>
    <property type="project" value="UniProtKB-KW"/>
</dbReference>
<dbReference type="GO" id="GO:0006955">
    <property type="term" value="P:immune response"/>
    <property type="evidence" value="ECO:0007669"/>
    <property type="project" value="InterPro"/>
</dbReference>
<dbReference type="GO" id="GO:0051781">
    <property type="term" value="P:positive regulation of cell division"/>
    <property type="evidence" value="ECO:0007669"/>
    <property type="project" value="UniProtKB-KW"/>
</dbReference>
<dbReference type="GO" id="GO:0001819">
    <property type="term" value="P:positive regulation of cytokine production"/>
    <property type="evidence" value="ECO:0007669"/>
    <property type="project" value="UniProtKB-ARBA"/>
</dbReference>
<dbReference type="GO" id="GO:0033092">
    <property type="term" value="P:positive regulation of immature T cell proliferation in thymus"/>
    <property type="evidence" value="ECO:0007669"/>
    <property type="project" value="TreeGrafter"/>
</dbReference>
<dbReference type="GO" id="GO:0046688">
    <property type="term" value="P:response to copper ion"/>
    <property type="evidence" value="ECO:0000250"/>
    <property type="project" value="UniProtKB"/>
</dbReference>
<dbReference type="CDD" id="cd23295">
    <property type="entry name" value="beta-trefoil_IL1A"/>
    <property type="match status" value="1"/>
</dbReference>
<dbReference type="FunFam" id="2.80.10.50:FF:000049">
    <property type="entry name" value="Interleukin-1 alpha"/>
    <property type="match status" value="1"/>
</dbReference>
<dbReference type="Gene3D" id="2.80.10.50">
    <property type="match status" value="1"/>
</dbReference>
<dbReference type="InterPro" id="IPR003295">
    <property type="entry name" value="IL-1_alpha"/>
</dbReference>
<dbReference type="InterPro" id="IPR020877">
    <property type="entry name" value="IL-1_CS"/>
</dbReference>
<dbReference type="InterPro" id="IPR000975">
    <property type="entry name" value="IL-1_fam"/>
</dbReference>
<dbReference type="InterPro" id="IPR003502">
    <property type="entry name" value="IL-1_propep"/>
</dbReference>
<dbReference type="InterPro" id="IPR008996">
    <property type="entry name" value="IL1/FGF"/>
</dbReference>
<dbReference type="PANTHER" id="PTHR10078:SF33">
    <property type="entry name" value="INTERLEUKIN-1 ALPHA"/>
    <property type="match status" value="1"/>
</dbReference>
<dbReference type="PANTHER" id="PTHR10078">
    <property type="entry name" value="INTERLEUKIN-1 FAMILY MEMBER"/>
    <property type="match status" value="1"/>
</dbReference>
<dbReference type="Pfam" id="PF00340">
    <property type="entry name" value="IL1"/>
    <property type="match status" value="1"/>
</dbReference>
<dbReference type="Pfam" id="PF02394">
    <property type="entry name" value="IL1_propep"/>
    <property type="match status" value="1"/>
</dbReference>
<dbReference type="PRINTS" id="PR00264">
    <property type="entry name" value="INTERLEUKIN1"/>
</dbReference>
<dbReference type="PRINTS" id="PR01358">
    <property type="entry name" value="INTRLEUKIN1A"/>
</dbReference>
<dbReference type="PRINTS" id="PR01357">
    <property type="entry name" value="INTRLEUKN1AB"/>
</dbReference>
<dbReference type="SMART" id="SM00125">
    <property type="entry name" value="IL1"/>
    <property type="match status" value="1"/>
</dbReference>
<dbReference type="SUPFAM" id="SSF50353">
    <property type="entry name" value="Cytokine"/>
    <property type="match status" value="1"/>
</dbReference>
<dbReference type="PROSITE" id="PS00253">
    <property type="entry name" value="INTERLEUKIN_1"/>
    <property type="match status" value="1"/>
</dbReference>
<gene>
    <name type="primary">IL1A</name>
</gene>
<evidence type="ECO:0000250" key="1"/>
<evidence type="ECO:0000250" key="2">
    <source>
        <dbReference type="UniProtKB" id="P01582"/>
    </source>
</evidence>
<evidence type="ECO:0000250" key="3">
    <source>
        <dbReference type="UniProtKB" id="P01583"/>
    </source>
</evidence>
<evidence type="ECO:0000255" key="4"/>
<evidence type="ECO:0000305" key="5"/>
<feature type="propeptide" id="PRO_0000015269" evidence="1">
    <location>
        <begin position="1"/>
        <end position="112"/>
    </location>
</feature>
<feature type="chain" id="PRO_0000015270" description="Interleukin-1 alpha">
    <location>
        <begin position="113"/>
        <end position="271"/>
    </location>
</feature>
<feature type="region of interest" description="Nuclear localization signal (NLS)" evidence="3">
    <location>
        <begin position="82"/>
        <end position="86"/>
    </location>
</feature>
<feature type="modified residue" description="N6-acetyllysine" evidence="3">
    <location>
        <position position="82"/>
    </location>
</feature>
<feature type="modified residue" description="Phosphoserine" evidence="2">
    <location>
        <position position="87"/>
    </location>
</feature>
<feature type="glycosylation site" description="N-linked (GlcNAc...) asparagine" evidence="4">
    <location>
        <position position="102"/>
    </location>
</feature>
<feature type="glycosylation site" description="N-linked (GlcNAc...) asparagine" evidence="4">
    <location>
        <position position="121"/>
    </location>
</feature>
<feature type="glycosylation site" description="N-linked (GlcNAc...) asparagine" evidence="4">
    <location>
        <position position="137"/>
    </location>
</feature>
<feature type="glycosylation site" description="N-linked (GlcNAc...) asparagine" evidence="4">
    <location>
        <position position="141"/>
    </location>
</feature>
<reference key="1">
    <citation type="submission" date="1997-01" db="EMBL/GenBank/DDBJ databases">
        <title>Molecular cloning and expression of cynomolgus monkey IL-1alpha.</title>
        <authorList>
            <person name="Tatsumi M."/>
        </authorList>
    </citation>
    <scope>NUCLEOTIDE SEQUENCE [MRNA]</scope>
</reference>
<accession>P79340</accession>
<keyword id="KW-0007">Acetylation</keyword>
<keyword id="KW-0202">Cytokine</keyword>
<keyword id="KW-0963">Cytoplasm</keyword>
<keyword id="KW-0325">Glycoprotein</keyword>
<keyword id="KW-0395">Inflammatory response</keyword>
<keyword id="KW-0497">Mitogen</keyword>
<keyword id="KW-0539">Nucleus</keyword>
<keyword id="KW-0597">Phosphoprotein</keyword>
<keyword id="KW-0666">Pyrogen</keyword>
<keyword id="KW-1185">Reference proteome</keyword>
<keyword id="KW-0964">Secreted</keyword>
<name>IL1A_MACFA</name>
<protein>
    <recommendedName>
        <fullName>Interleukin-1 alpha</fullName>
        <shortName>IL-1 alpha</shortName>
    </recommendedName>
    <alternativeName>
        <fullName>Hematopoietin-1</fullName>
    </alternativeName>
</protein>